<feature type="chain" id="PRO_0000083582" description="Isocitrate dehydrogenase [NADP]">
    <location>
        <begin position="1"/>
        <end position="20" status="greater than"/>
    </location>
</feature>
<feature type="non-terminal residue" evidence="3">
    <location>
        <position position="20"/>
    </location>
</feature>
<evidence type="ECO:0000250" key="1"/>
<evidence type="ECO:0000250" key="2">
    <source>
        <dbReference type="UniProtKB" id="Q06197"/>
    </source>
</evidence>
<evidence type="ECO:0000305" key="3"/>
<dbReference type="EC" id="1.1.1.42"/>
<dbReference type="GO" id="GO:0005737">
    <property type="term" value="C:cytoplasm"/>
    <property type="evidence" value="ECO:0007669"/>
    <property type="project" value="UniProtKB-SubCell"/>
</dbReference>
<dbReference type="GO" id="GO:0004450">
    <property type="term" value="F:isocitrate dehydrogenase (NADP+) activity"/>
    <property type="evidence" value="ECO:0007669"/>
    <property type="project" value="UniProtKB-EC"/>
</dbReference>
<dbReference type="GO" id="GO:0006099">
    <property type="term" value="P:tricarboxylic acid cycle"/>
    <property type="evidence" value="ECO:0007669"/>
    <property type="project" value="UniProtKB-KW"/>
</dbReference>
<comment type="catalytic activity">
    <reaction evidence="2">
        <text>D-threo-isocitrate + NADP(+) = 2-oxoglutarate + CO2 + NADPH</text>
        <dbReference type="Rhea" id="RHEA:19629"/>
        <dbReference type="ChEBI" id="CHEBI:15562"/>
        <dbReference type="ChEBI" id="CHEBI:16526"/>
        <dbReference type="ChEBI" id="CHEBI:16810"/>
        <dbReference type="ChEBI" id="CHEBI:57783"/>
        <dbReference type="ChEBI" id="CHEBI:58349"/>
        <dbReference type="EC" id="1.1.1.42"/>
    </reaction>
</comment>
<comment type="cofactor">
    <cofactor evidence="1">
        <name>Mn(2+)</name>
        <dbReference type="ChEBI" id="CHEBI:29035"/>
    </cofactor>
    <cofactor evidence="1">
        <name>Mg(2+)</name>
        <dbReference type="ChEBI" id="CHEBI:18420"/>
    </cofactor>
</comment>
<comment type="subcellular location">
    <subcellularLocation>
        <location evidence="1">Cytoplasm</location>
    </subcellularLocation>
</comment>
<comment type="miscellaneous">
    <text evidence="3">On the 2D-gel the determined pI of this protein is: 6.8, its MW is: 32.3 kDa.</text>
</comment>
<comment type="similarity">
    <text evidence="3">Belongs to the isocitrate and isopropylmalate dehydrogenases family.</text>
</comment>
<proteinExistence type="evidence at protein level"/>
<keyword id="KW-0963">Cytoplasm</keyword>
<keyword id="KW-0903">Direct protein sequencing</keyword>
<keyword id="KW-0460">Magnesium</keyword>
<keyword id="KW-0464">Manganese</keyword>
<keyword id="KW-0521">NADP</keyword>
<keyword id="KW-0560">Oxidoreductase</keyword>
<keyword id="KW-0816">Tricarboxylic acid cycle</keyword>
<reference evidence="3" key="1">
    <citation type="submission" date="2003-12" db="UniProtKB">
        <title>Comparative study of protein profiles on pathogenic and nonpathogenic Naegleria species by 2D-PAGE.</title>
        <authorList>
            <person name="Omura M."/>
            <person name="Furushima-Shimogawara R."/>
            <person name="Izumiyama S."/>
            <person name="Endo T."/>
        </authorList>
    </citation>
    <scope>PROTEIN SEQUENCE</scope>
    <source>
        <strain>ATCC 30214 / Nf 66</strain>
    </source>
</reference>
<sequence>AXFQKIKVANPVVELDGDEM</sequence>
<name>IDHC_NAEFO</name>
<protein>
    <recommendedName>
        <fullName>Isocitrate dehydrogenase [NADP]</fullName>
        <shortName>IDH</shortName>
        <ecNumber>1.1.1.42</ecNumber>
    </recommendedName>
    <alternativeName>
        <fullName>IDP</fullName>
    </alternativeName>
    <alternativeName>
        <fullName>NADP(+)-specific ICDH</fullName>
    </alternativeName>
    <alternativeName>
        <fullName>NF033</fullName>
    </alternativeName>
    <alternativeName>
        <fullName>Oxalosuccinate decarboxylase</fullName>
    </alternativeName>
</protein>
<accession>P83726</accession>
<organism evidence="3">
    <name type="scientific">Naegleria fowleri</name>
    <name type="common">Brain eating amoeba</name>
    <dbReference type="NCBI Taxonomy" id="5763"/>
    <lineage>
        <taxon>Eukaryota</taxon>
        <taxon>Discoba</taxon>
        <taxon>Heterolobosea</taxon>
        <taxon>Tetramitia</taxon>
        <taxon>Eutetramitia</taxon>
        <taxon>Vahlkampfiidae</taxon>
        <taxon>Naegleria</taxon>
    </lineage>
</organism>